<name>SP130_HUMAN</name>
<reference key="1">
    <citation type="journal article" date="2003" name="Mol. Cell. Biol.">
        <title>Identification and characterization of three new components of the mSin3A corepressor complex.</title>
        <authorList>
            <person name="Fleischer T.C."/>
            <person name="Yun U.J."/>
            <person name="Ayer D.E."/>
        </authorList>
    </citation>
    <scope>NUCLEOTIDE SEQUENCE [MRNA] (ISOFORM 1)</scope>
    <scope>FUNCTION</scope>
    <scope>TISSUE SPECIFICITY</scope>
    <scope>ACETYLATION</scope>
    <scope>IDENTIFICATION IN A MSIN3A COREPRESSOR COMPLEX WITH SIN3A; SAP130; SUDS3; ARID4B; HDAC1 AND HDAC2</scope>
</reference>
<reference key="2">
    <citation type="journal article" date="2001" name="Genome Res.">
        <title>Towards a catalog of human genes and proteins: sequencing and analysis of 500 novel complete protein coding human cDNAs.</title>
        <authorList>
            <person name="Wiemann S."/>
            <person name="Weil B."/>
            <person name="Wellenreuther R."/>
            <person name="Gassenhuber J."/>
            <person name="Glassl S."/>
            <person name="Ansorge W."/>
            <person name="Boecher M."/>
            <person name="Bloecker H."/>
            <person name="Bauersachs S."/>
            <person name="Blum H."/>
            <person name="Lauber J."/>
            <person name="Duesterhoeft A."/>
            <person name="Beyer A."/>
            <person name="Koehrer K."/>
            <person name="Strack N."/>
            <person name="Mewes H.-W."/>
            <person name="Ottenwaelder B."/>
            <person name="Obermaier B."/>
            <person name="Tampe J."/>
            <person name="Heubner D."/>
            <person name="Wambutt R."/>
            <person name="Korn B."/>
            <person name="Klein M."/>
            <person name="Poustka A."/>
        </authorList>
    </citation>
    <scope>NUCLEOTIDE SEQUENCE [LARGE SCALE MRNA] (ISOFORM 1)</scope>
    <source>
        <tissue>Testis</tissue>
    </source>
</reference>
<reference key="3">
    <citation type="journal article" date="2004" name="Nat. Genet.">
        <title>Complete sequencing and characterization of 21,243 full-length human cDNAs.</title>
        <authorList>
            <person name="Ota T."/>
            <person name="Suzuki Y."/>
            <person name="Nishikawa T."/>
            <person name="Otsuki T."/>
            <person name="Sugiyama T."/>
            <person name="Irie R."/>
            <person name="Wakamatsu A."/>
            <person name="Hayashi K."/>
            <person name="Sato H."/>
            <person name="Nagai K."/>
            <person name="Kimura K."/>
            <person name="Makita H."/>
            <person name="Sekine M."/>
            <person name="Obayashi M."/>
            <person name="Nishi T."/>
            <person name="Shibahara T."/>
            <person name="Tanaka T."/>
            <person name="Ishii S."/>
            <person name="Yamamoto J."/>
            <person name="Saito K."/>
            <person name="Kawai Y."/>
            <person name="Isono Y."/>
            <person name="Nakamura Y."/>
            <person name="Nagahari K."/>
            <person name="Murakami K."/>
            <person name="Yasuda T."/>
            <person name="Iwayanagi T."/>
            <person name="Wagatsuma M."/>
            <person name="Shiratori A."/>
            <person name="Sudo H."/>
            <person name="Hosoiri T."/>
            <person name="Kaku Y."/>
            <person name="Kodaira H."/>
            <person name="Kondo H."/>
            <person name="Sugawara M."/>
            <person name="Takahashi M."/>
            <person name="Kanda K."/>
            <person name="Yokoi T."/>
            <person name="Furuya T."/>
            <person name="Kikkawa E."/>
            <person name="Omura Y."/>
            <person name="Abe K."/>
            <person name="Kamihara K."/>
            <person name="Katsuta N."/>
            <person name="Sato K."/>
            <person name="Tanikawa M."/>
            <person name="Yamazaki M."/>
            <person name="Ninomiya K."/>
            <person name="Ishibashi T."/>
            <person name="Yamashita H."/>
            <person name="Murakawa K."/>
            <person name="Fujimori K."/>
            <person name="Tanai H."/>
            <person name="Kimata M."/>
            <person name="Watanabe M."/>
            <person name="Hiraoka S."/>
            <person name="Chiba Y."/>
            <person name="Ishida S."/>
            <person name="Ono Y."/>
            <person name="Takiguchi S."/>
            <person name="Watanabe S."/>
            <person name="Yosida M."/>
            <person name="Hotuta T."/>
            <person name="Kusano J."/>
            <person name="Kanehori K."/>
            <person name="Takahashi-Fujii A."/>
            <person name="Hara H."/>
            <person name="Tanase T.-O."/>
            <person name="Nomura Y."/>
            <person name="Togiya S."/>
            <person name="Komai F."/>
            <person name="Hara R."/>
            <person name="Takeuchi K."/>
            <person name="Arita M."/>
            <person name="Imose N."/>
            <person name="Musashino K."/>
            <person name="Yuuki H."/>
            <person name="Oshima A."/>
            <person name="Sasaki N."/>
            <person name="Aotsuka S."/>
            <person name="Yoshikawa Y."/>
            <person name="Matsunawa H."/>
            <person name="Ichihara T."/>
            <person name="Shiohata N."/>
            <person name="Sano S."/>
            <person name="Moriya S."/>
            <person name="Momiyama H."/>
            <person name="Satoh N."/>
            <person name="Takami S."/>
            <person name="Terashima Y."/>
            <person name="Suzuki O."/>
            <person name="Nakagawa S."/>
            <person name="Senoh A."/>
            <person name="Mizoguchi H."/>
            <person name="Goto Y."/>
            <person name="Shimizu F."/>
            <person name="Wakebe H."/>
            <person name="Hishigaki H."/>
            <person name="Watanabe T."/>
            <person name="Sugiyama A."/>
            <person name="Takemoto M."/>
            <person name="Kawakami B."/>
            <person name="Yamazaki M."/>
            <person name="Watanabe K."/>
            <person name="Kumagai A."/>
            <person name="Itakura S."/>
            <person name="Fukuzumi Y."/>
            <person name="Fujimori Y."/>
            <person name="Komiyama M."/>
            <person name="Tashiro H."/>
            <person name="Tanigami A."/>
            <person name="Fujiwara T."/>
            <person name="Ono T."/>
            <person name="Yamada K."/>
            <person name="Fujii Y."/>
            <person name="Ozaki K."/>
            <person name="Hirao M."/>
            <person name="Ohmori Y."/>
            <person name="Kawabata A."/>
            <person name="Hikiji T."/>
            <person name="Kobatake N."/>
            <person name="Inagaki H."/>
            <person name="Ikema Y."/>
            <person name="Okamoto S."/>
            <person name="Okitani R."/>
            <person name="Kawakami T."/>
            <person name="Noguchi S."/>
            <person name="Itoh T."/>
            <person name="Shigeta K."/>
            <person name="Senba T."/>
            <person name="Matsumura K."/>
            <person name="Nakajima Y."/>
            <person name="Mizuno T."/>
            <person name="Morinaga M."/>
            <person name="Sasaki M."/>
            <person name="Togashi T."/>
            <person name="Oyama M."/>
            <person name="Hata H."/>
            <person name="Watanabe M."/>
            <person name="Komatsu T."/>
            <person name="Mizushima-Sugano J."/>
            <person name="Satoh T."/>
            <person name="Shirai Y."/>
            <person name="Takahashi Y."/>
            <person name="Nakagawa K."/>
            <person name="Okumura K."/>
            <person name="Nagase T."/>
            <person name="Nomura N."/>
            <person name="Kikuchi H."/>
            <person name="Masuho Y."/>
            <person name="Yamashita R."/>
            <person name="Nakai K."/>
            <person name="Yada T."/>
            <person name="Nakamura Y."/>
            <person name="Ohara O."/>
            <person name="Isogai T."/>
            <person name="Sugano S."/>
        </authorList>
    </citation>
    <scope>NUCLEOTIDE SEQUENCE [LARGE SCALE MRNA] (ISOFORM 2)</scope>
</reference>
<reference key="4">
    <citation type="journal article" date="2005" name="Nature">
        <title>Generation and annotation of the DNA sequences of human chromosomes 2 and 4.</title>
        <authorList>
            <person name="Hillier L.W."/>
            <person name="Graves T.A."/>
            <person name="Fulton R.S."/>
            <person name="Fulton L.A."/>
            <person name="Pepin K.H."/>
            <person name="Minx P."/>
            <person name="Wagner-McPherson C."/>
            <person name="Layman D."/>
            <person name="Wylie K."/>
            <person name="Sekhon M."/>
            <person name="Becker M.C."/>
            <person name="Fewell G.A."/>
            <person name="Delehaunty K.D."/>
            <person name="Miner T.L."/>
            <person name="Nash W.E."/>
            <person name="Kremitzki C."/>
            <person name="Oddy L."/>
            <person name="Du H."/>
            <person name="Sun H."/>
            <person name="Bradshaw-Cordum H."/>
            <person name="Ali J."/>
            <person name="Carter J."/>
            <person name="Cordes M."/>
            <person name="Harris A."/>
            <person name="Isak A."/>
            <person name="van Brunt A."/>
            <person name="Nguyen C."/>
            <person name="Du F."/>
            <person name="Courtney L."/>
            <person name="Kalicki J."/>
            <person name="Ozersky P."/>
            <person name="Abbott S."/>
            <person name="Armstrong J."/>
            <person name="Belter E.A."/>
            <person name="Caruso L."/>
            <person name="Cedroni M."/>
            <person name="Cotton M."/>
            <person name="Davidson T."/>
            <person name="Desai A."/>
            <person name="Elliott G."/>
            <person name="Erb T."/>
            <person name="Fronick C."/>
            <person name="Gaige T."/>
            <person name="Haakenson W."/>
            <person name="Haglund K."/>
            <person name="Holmes A."/>
            <person name="Harkins R."/>
            <person name="Kim K."/>
            <person name="Kruchowski S.S."/>
            <person name="Strong C.M."/>
            <person name="Grewal N."/>
            <person name="Goyea E."/>
            <person name="Hou S."/>
            <person name="Levy A."/>
            <person name="Martinka S."/>
            <person name="Mead K."/>
            <person name="McLellan M.D."/>
            <person name="Meyer R."/>
            <person name="Randall-Maher J."/>
            <person name="Tomlinson C."/>
            <person name="Dauphin-Kohlberg S."/>
            <person name="Kozlowicz-Reilly A."/>
            <person name="Shah N."/>
            <person name="Swearengen-Shahid S."/>
            <person name="Snider J."/>
            <person name="Strong J.T."/>
            <person name="Thompson J."/>
            <person name="Yoakum M."/>
            <person name="Leonard S."/>
            <person name="Pearman C."/>
            <person name="Trani L."/>
            <person name="Radionenko M."/>
            <person name="Waligorski J.E."/>
            <person name="Wang C."/>
            <person name="Rock S.M."/>
            <person name="Tin-Wollam A.-M."/>
            <person name="Maupin R."/>
            <person name="Latreille P."/>
            <person name="Wendl M.C."/>
            <person name="Yang S.-P."/>
            <person name="Pohl C."/>
            <person name="Wallis J.W."/>
            <person name="Spieth J."/>
            <person name="Bieri T.A."/>
            <person name="Berkowicz N."/>
            <person name="Nelson J.O."/>
            <person name="Osborne J."/>
            <person name="Ding L."/>
            <person name="Meyer R."/>
            <person name="Sabo A."/>
            <person name="Shotland Y."/>
            <person name="Sinha P."/>
            <person name="Wohldmann P.E."/>
            <person name="Cook L.L."/>
            <person name="Hickenbotham M.T."/>
            <person name="Eldred J."/>
            <person name="Williams D."/>
            <person name="Jones T.A."/>
            <person name="She X."/>
            <person name="Ciccarelli F.D."/>
            <person name="Izaurralde E."/>
            <person name="Taylor J."/>
            <person name="Schmutz J."/>
            <person name="Myers R.M."/>
            <person name="Cox D.R."/>
            <person name="Huang X."/>
            <person name="McPherson J.D."/>
            <person name="Mardis E.R."/>
            <person name="Clifton S.W."/>
            <person name="Warren W.C."/>
            <person name="Chinwalla A.T."/>
            <person name="Eddy S.R."/>
            <person name="Marra M.A."/>
            <person name="Ovcharenko I."/>
            <person name="Furey T.S."/>
            <person name="Miller W."/>
            <person name="Eichler E.E."/>
            <person name="Bork P."/>
            <person name="Suyama M."/>
            <person name="Torrents D."/>
            <person name="Waterston R.H."/>
            <person name="Wilson R.K."/>
        </authorList>
    </citation>
    <scope>NUCLEOTIDE SEQUENCE [LARGE SCALE GENOMIC DNA]</scope>
</reference>
<reference key="5">
    <citation type="journal article" date="2004" name="Genome Res.">
        <title>The status, quality, and expansion of the NIH full-length cDNA project: the Mammalian Gene Collection (MGC).</title>
        <authorList>
            <consortium name="The MGC Project Team"/>
        </authorList>
    </citation>
    <scope>NUCLEOTIDE SEQUENCE [LARGE SCALE MRNA] (ISOFORMS 1 AND 3)</scope>
</reference>
<reference key="6">
    <citation type="journal article" date="2005" name="J. Biol. Chem.">
        <title>Systematic identification and analysis of mammalian small ubiquitin-like modifier substrates.</title>
        <authorList>
            <person name="Gocke C.B."/>
            <person name="Yu H."/>
            <person name="Kang J."/>
        </authorList>
    </citation>
    <scope>SUMOYLATION WITH SUMO1</scope>
    <scope>SUBCELLULAR LOCATION</scope>
</reference>
<reference key="7">
    <citation type="journal article" date="2008" name="Proc. Natl. Acad. Sci. U.S.A.">
        <title>A quantitative atlas of mitotic phosphorylation.</title>
        <authorList>
            <person name="Dephoure N."/>
            <person name="Zhou C."/>
            <person name="Villen J."/>
            <person name="Beausoleil S.A."/>
            <person name="Bakalarski C.E."/>
            <person name="Elledge S.J."/>
            <person name="Gygi S.P."/>
        </authorList>
    </citation>
    <scope>PHOSPHORYLATION [LARGE SCALE ANALYSIS] AT THR-355; SER-442 AND SER-875</scope>
    <scope>IDENTIFICATION BY MASS SPECTROMETRY [LARGE SCALE ANALYSIS]</scope>
    <source>
        <tissue>Cervix carcinoma</tissue>
    </source>
</reference>
<reference key="8">
    <citation type="journal article" date="2010" name="Sci. Signal.">
        <title>Quantitative phosphoproteomics reveals widespread full phosphorylation site occupancy during mitosis.</title>
        <authorList>
            <person name="Olsen J.V."/>
            <person name="Vermeulen M."/>
            <person name="Santamaria A."/>
            <person name="Kumar C."/>
            <person name="Miller M.L."/>
            <person name="Jensen L.J."/>
            <person name="Gnad F."/>
            <person name="Cox J."/>
            <person name="Jensen T.S."/>
            <person name="Nigg E.A."/>
            <person name="Brunak S."/>
            <person name="Mann M."/>
        </authorList>
    </citation>
    <scope>PHOSPHORYLATION [LARGE SCALE ANALYSIS] AT THR-355; SER-442; SER-855 AND THR-856</scope>
    <scope>IDENTIFICATION BY MASS SPECTROMETRY [LARGE SCALE ANALYSIS]</scope>
    <source>
        <tissue>Cervix carcinoma</tissue>
    </source>
</reference>
<reference key="9">
    <citation type="journal article" date="2011" name="Sci. Signal.">
        <title>System-wide temporal characterization of the proteome and phosphoproteome of human embryonic stem cell differentiation.</title>
        <authorList>
            <person name="Rigbolt K.T."/>
            <person name="Prokhorova T.A."/>
            <person name="Akimov V."/>
            <person name="Henningsen J."/>
            <person name="Johansen P.T."/>
            <person name="Kratchmarova I."/>
            <person name="Kassem M."/>
            <person name="Mann M."/>
            <person name="Olsen J.V."/>
            <person name="Blagoev B."/>
        </authorList>
    </citation>
    <scope>PHOSPHORYLATION [LARGE SCALE ANALYSIS] AT THR-856</scope>
    <scope>IDENTIFICATION BY MASS SPECTROMETRY [LARGE SCALE ANALYSIS]</scope>
</reference>
<reference key="10">
    <citation type="journal article" date="2013" name="J. Proteome Res.">
        <title>Toward a comprehensive characterization of a human cancer cell phosphoproteome.</title>
        <authorList>
            <person name="Zhou H."/>
            <person name="Di Palma S."/>
            <person name="Preisinger C."/>
            <person name="Peng M."/>
            <person name="Polat A.N."/>
            <person name="Heck A.J."/>
            <person name="Mohammed S."/>
        </authorList>
    </citation>
    <scope>PHOSPHORYLATION [LARGE SCALE ANALYSIS] AT SER-442; SER-465; SER-855 AND THR-856</scope>
    <scope>IDENTIFICATION BY MASS SPECTROMETRY [LARGE SCALE ANALYSIS]</scope>
    <source>
        <tissue>Cervix carcinoma</tissue>
        <tissue>Erythroleukemia</tissue>
    </source>
</reference>
<reference key="11">
    <citation type="journal article" date="2014" name="J. Proteomics">
        <title>An enzyme assisted RP-RPLC approach for in-depth analysis of human liver phosphoproteome.</title>
        <authorList>
            <person name="Bian Y."/>
            <person name="Song C."/>
            <person name="Cheng K."/>
            <person name="Dong M."/>
            <person name="Wang F."/>
            <person name="Huang J."/>
            <person name="Sun D."/>
            <person name="Wang L."/>
            <person name="Ye M."/>
            <person name="Zou H."/>
        </authorList>
    </citation>
    <scope>IDENTIFICATION BY MASS SPECTROMETRY [LARGE SCALE ANALYSIS]</scope>
    <source>
        <tissue>Liver</tissue>
    </source>
</reference>
<reference key="12">
    <citation type="journal article" date="2014" name="Mol. Cell. Proteomics">
        <title>Immunoaffinity enrichment and mass spectrometry analysis of protein methylation.</title>
        <authorList>
            <person name="Guo A."/>
            <person name="Gu H."/>
            <person name="Zhou J."/>
            <person name="Mulhern D."/>
            <person name="Wang Y."/>
            <person name="Lee K.A."/>
            <person name="Yang V."/>
            <person name="Aguiar M."/>
            <person name="Kornhauser J."/>
            <person name="Jia X."/>
            <person name="Ren J."/>
            <person name="Beausoleil S.A."/>
            <person name="Silva J.C."/>
            <person name="Vemulapalli V."/>
            <person name="Bedford M.T."/>
            <person name="Comb M.J."/>
        </authorList>
    </citation>
    <scope>METHYLATION [LARGE SCALE ANALYSIS] AT ARG-232</scope>
    <scope>IDENTIFICATION BY MASS SPECTROMETRY [LARGE SCALE ANALYSIS]</scope>
    <source>
        <tissue>Colon carcinoma</tissue>
    </source>
</reference>
<reference key="13">
    <citation type="journal article" date="2014" name="Nat. Struct. Mol. Biol.">
        <title>Uncovering global SUMOylation signaling networks in a site-specific manner.</title>
        <authorList>
            <person name="Hendriks I.A."/>
            <person name="D'Souza R.C."/>
            <person name="Yang B."/>
            <person name="Verlaan-de Vries M."/>
            <person name="Mann M."/>
            <person name="Vertegaal A.C."/>
        </authorList>
    </citation>
    <scope>SUMOYLATION [LARGE SCALE ANALYSIS] AT LYS-785 AND LYS-869</scope>
    <scope>IDENTIFICATION BY MASS SPECTROMETRY [LARGE SCALE ANALYSIS]</scope>
</reference>
<reference key="14">
    <citation type="journal article" date="2015" name="Mol. Cell. Proteomics">
        <title>System-wide analysis of SUMOylation dynamics in response to replication stress reveals novel small ubiquitin-like modified target proteins and acceptor lysines relevant for genome stability.</title>
        <authorList>
            <person name="Xiao Z."/>
            <person name="Chang J.G."/>
            <person name="Hendriks I.A."/>
            <person name="Sigurdsson J.O."/>
            <person name="Olsen J.V."/>
            <person name="Vertegaal A.C."/>
        </authorList>
    </citation>
    <scope>SUMOYLATION [LARGE SCALE ANALYSIS] AT LYS-869</scope>
    <scope>IDENTIFICATION BY MASS SPECTROMETRY [LARGE SCALE ANALYSIS]</scope>
</reference>
<reference key="15">
    <citation type="journal article" date="2017" name="Nat. Struct. Mol. Biol.">
        <title>Site-specific mapping of the human SUMO proteome reveals co-modification with phosphorylation.</title>
        <authorList>
            <person name="Hendriks I.A."/>
            <person name="Lyon D."/>
            <person name="Young C."/>
            <person name="Jensen L.J."/>
            <person name="Vertegaal A.C."/>
            <person name="Nielsen M.L."/>
        </authorList>
    </citation>
    <scope>SUMOYLATION [LARGE SCALE ANALYSIS] AT LYS-785; LYS-864 AND LYS-869</scope>
    <scope>IDENTIFICATION BY MASS SPECTROMETRY [LARGE SCALE ANALYSIS]</scope>
</reference>
<organism>
    <name type="scientific">Homo sapiens</name>
    <name type="common">Human</name>
    <dbReference type="NCBI Taxonomy" id="9606"/>
    <lineage>
        <taxon>Eukaryota</taxon>
        <taxon>Metazoa</taxon>
        <taxon>Chordata</taxon>
        <taxon>Craniata</taxon>
        <taxon>Vertebrata</taxon>
        <taxon>Euteleostomi</taxon>
        <taxon>Mammalia</taxon>
        <taxon>Eutheria</taxon>
        <taxon>Euarchontoglires</taxon>
        <taxon>Primates</taxon>
        <taxon>Haplorrhini</taxon>
        <taxon>Catarrhini</taxon>
        <taxon>Hominidae</taxon>
        <taxon>Homo</taxon>
    </lineage>
</organism>
<evidence type="ECO:0000250" key="1"/>
<evidence type="ECO:0000256" key="2">
    <source>
        <dbReference type="SAM" id="MobiDB-lite"/>
    </source>
</evidence>
<evidence type="ECO:0000269" key="3">
    <source>
    </source>
</evidence>
<evidence type="ECO:0000269" key="4">
    <source>
    </source>
</evidence>
<evidence type="ECO:0000303" key="5">
    <source>
    </source>
</evidence>
<evidence type="ECO:0000303" key="6">
    <source>
    </source>
</evidence>
<evidence type="ECO:0000305" key="7"/>
<evidence type="ECO:0000305" key="8">
    <source>
    </source>
</evidence>
<evidence type="ECO:0007744" key="9">
    <source>
    </source>
</evidence>
<evidence type="ECO:0007744" key="10">
    <source>
    </source>
</evidence>
<evidence type="ECO:0007744" key="11">
    <source>
    </source>
</evidence>
<evidence type="ECO:0007744" key="12">
    <source>
    </source>
</evidence>
<evidence type="ECO:0007744" key="13">
    <source>
    </source>
</evidence>
<evidence type="ECO:0007744" key="14">
    <source>
    </source>
</evidence>
<evidence type="ECO:0007744" key="15">
    <source>
    </source>
</evidence>
<evidence type="ECO:0007744" key="16">
    <source>
    </source>
</evidence>
<dbReference type="EMBL" id="AY220791">
    <property type="protein sequence ID" value="AAO63591.1"/>
    <property type="molecule type" value="mRNA"/>
</dbReference>
<dbReference type="EMBL" id="AL136833">
    <property type="protein sequence ID" value="CAB66767.1"/>
    <property type="molecule type" value="mRNA"/>
</dbReference>
<dbReference type="EMBL" id="AK022823">
    <property type="protein sequence ID" value="BAB14261.1"/>
    <property type="molecule type" value="mRNA"/>
</dbReference>
<dbReference type="EMBL" id="AC118060">
    <property type="protein sequence ID" value="AAX88975.1"/>
    <property type="molecule type" value="Genomic_DNA"/>
</dbReference>
<dbReference type="EMBL" id="AC012306">
    <property type="protein sequence ID" value="AAY14878.1"/>
    <property type="molecule type" value="Genomic_DNA"/>
</dbReference>
<dbReference type="EMBL" id="BC017453">
    <property type="protein sequence ID" value="AAH17453.2"/>
    <property type="molecule type" value="mRNA"/>
</dbReference>
<dbReference type="EMBL" id="BC117255">
    <property type="protein sequence ID" value="AAI17256.1"/>
    <property type="molecule type" value="mRNA"/>
</dbReference>
<dbReference type="EMBL" id="BC143898">
    <property type="protein sequence ID" value="AAI43899.1"/>
    <property type="molecule type" value="mRNA"/>
</dbReference>
<dbReference type="CCDS" id="CCDS2153.1">
    <molecule id="Q9H0E3-1"/>
</dbReference>
<dbReference type="CCDS" id="CCDS54397.1">
    <molecule id="Q9H0E3-3"/>
</dbReference>
<dbReference type="RefSeq" id="NP_001139400.1">
    <molecule id="Q9H0E3-3"/>
    <property type="nucleotide sequence ID" value="NM_001145928.2"/>
</dbReference>
<dbReference type="RefSeq" id="NP_001317228.1">
    <property type="nucleotide sequence ID" value="NM_001330299.1"/>
</dbReference>
<dbReference type="RefSeq" id="NP_078821.2">
    <molecule id="Q9H0E3-1"/>
    <property type="nucleotide sequence ID" value="NM_024545.3"/>
</dbReference>
<dbReference type="SMR" id="Q9H0E3"/>
<dbReference type="BioGRID" id="122735">
    <property type="interactions" value="189"/>
</dbReference>
<dbReference type="ComplexPortal" id="CPX-3321">
    <property type="entry name" value="SIN3A histone deacetylase complex"/>
</dbReference>
<dbReference type="ComplexPortal" id="CPX-3322">
    <property type="entry name" value="SIN3B histone deacetylase complex"/>
</dbReference>
<dbReference type="ComplexPortal" id="CPX-3323">
    <property type="entry name" value="SIN3A histone deacetylase complex, ES cell-specific variant"/>
</dbReference>
<dbReference type="CORUM" id="Q9H0E3"/>
<dbReference type="FunCoup" id="Q9H0E3">
    <property type="interactions" value="3451"/>
</dbReference>
<dbReference type="IntAct" id="Q9H0E3">
    <property type="interactions" value="63"/>
</dbReference>
<dbReference type="MINT" id="Q9H0E3"/>
<dbReference type="STRING" id="9606.ENSP00000350333"/>
<dbReference type="ChEMBL" id="CHEMBL1229012"/>
<dbReference type="GlyCosmos" id="Q9H0E3">
    <property type="glycosylation" value="23 sites, 2 glycans"/>
</dbReference>
<dbReference type="GlyGen" id="Q9H0E3">
    <property type="glycosylation" value="35 sites, 2 O-linked glycans (34 sites)"/>
</dbReference>
<dbReference type="iPTMnet" id="Q9H0E3"/>
<dbReference type="MetOSite" id="Q9H0E3"/>
<dbReference type="PhosphoSitePlus" id="Q9H0E3"/>
<dbReference type="BioMuta" id="SAP130"/>
<dbReference type="DMDM" id="74717977"/>
<dbReference type="jPOST" id="Q9H0E3"/>
<dbReference type="MassIVE" id="Q9H0E3"/>
<dbReference type="PaxDb" id="9606-ENSP00000350333"/>
<dbReference type="PeptideAtlas" id="Q9H0E3"/>
<dbReference type="ProteomicsDB" id="80261">
    <molecule id="Q9H0E3-1"/>
</dbReference>
<dbReference type="ProteomicsDB" id="80262">
    <molecule id="Q9H0E3-2"/>
</dbReference>
<dbReference type="ProteomicsDB" id="80263">
    <molecule id="Q9H0E3-3"/>
</dbReference>
<dbReference type="Pumba" id="Q9H0E3"/>
<dbReference type="Antibodypedia" id="33473">
    <property type="antibodies" value="164 antibodies from 27 providers"/>
</dbReference>
<dbReference type="DNASU" id="79595"/>
<dbReference type="Ensembl" id="ENST00000259235.7">
    <molecule id="Q9H0E3-1"/>
    <property type="protein sequence ID" value="ENSP00000259235.3"/>
    <property type="gene ID" value="ENSG00000136715.19"/>
</dbReference>
<dbReference type="Ensembl" id="ENST00000357702.9">
    <molecule id="Q9H0E3-3"/>
    <property type="protein sequence ID" value="ENSP00000350333.5"/>
    <property type="gene ID" value="ENSG00000136715.19"/>
</dbReference>
<dbReference type="GeneID" id="79595"/>
<dbReference type="KEGG" id="hsa:79595"/>
<dbReference type="UCSC" id="uc002tpp.3">
    <molecule id="Q9H0E3-1"/>
    <property type="organism name" value="human"/>
</dbReference>
<dbReference type="AGR" id="HGNC:29813"/>
<dbReference type="CTD" id="79595"/>
<dbReference type="DisGeNET" id="79595"/>
<dbReference type="GeneCards" id="SAP130"/>
<dbReference type="HGNC" id="HGNC:29813">
    <property type="gene designation" value="SAP130"/>
</dbReference>
<dbReference type="HPA" id="ENSG00000136715">
    <property type="expression patterns" value="Tissue enhanced (testis)"/>
</dbReference>
<dbReference type="MIM" id="609697">
    <property type="type" value="gene"/>
</dbReference>
<dbReference type="neXtProt" id="NX_Q9H0E3"/>
<dbReference type="OpenTargets" id="ENSG00000136715"/>
<dbReference type="PharmGKB" id="PA143485608"/>
<dbReference type="VEuPathDB" id="HostDB:ENSG00000136715"/>
<dbReference type="eggNOG" id="ENOG502QQ6P">
    <property type="taxonomic scope" value="Eukaryota"/>
</dbReference>
<dbReference type="GeneTree" id="ENSGT00440000037733"/>
<dbReference type="InParanoid" id="Q9H0E3"/>
<dbReference type="OMA" id="GXVPPLA"/>
<dbReference type="OrthoDB" id="10048604at2759"/>
<dbReference type="PAN-GO" id="Q9H0E3">
    <property type="GO annotations" value="2 GO annotations based on evolutionary models"/>
</dbReference>
<dbReference type="PhylomeDB" id="Q9H0E3"/>
<dbReference type="TreeFam" id="TF332685"/>
<dbReference type="PathwayCommons" id="Q9H0E3"/>
<dbReference type="Reactome" id="R-HSA-3214847">
    <property type="pathway name" value="HATs acetylate histones"/>
</dbReference>
<dbReference type="Reactome" id="R-HSA-427413">
    <property type="pathway name" value="NoRC negatively regulates rRNA expression"/>
</dbReference>
<dbReference type="SignaLink" id="Q9H0E3"/>
<dbReference type="BioGRID-ORCS" id="79595">
    <property type="hits" value="274 hits in 1173 CRISPR screens"/>
</dbReference>
<dbReference type="ChiTaRS" id="SAP130">
    <property type="organism name" value="human"/>
</dbReference>
<dbReference type="GeneWiki" id="SAP130"/>
<dbReference type="GenomeRNAi" id="79595"/>
<dbReference type="Pharos" id="Q9H0E3">
    <property type="development level" value="Tdark"/>
</dbReference>
<dbReference type="PRO" id="PR:Q9H0E3"/>
<dbReference type="Proteomes" id="UP000005640">
    <property type="component" value="Chromosome 2"/>
</dbReference>
<dbReference type="RNAct" id="Q9H0E3">
    <property type="molecule type" value="protein"/>
</dbReference>
<dbReference type="Bgee" id="ENSG00000136715">
    <property type="expression patterns" value="Expressed in sperm and 178 other cell types or tissues"/>
</dbReference>
<dbReference type="ExpressionAtlas" id="Q9H0E3">
    <property type="expression patterns" value="baseline and differential"/>
</dbReference>
<dbReference type="GO" id="GO:0016607">
    <property type="term" value="C:nuclear speck"/>
    <property type="evidence" value="ECO:0000314"/>
    <property type="project" value="HPA"/>
</dbReference>
<dbReference type="GO" id="GO:0005634">
    <property type="term" value="C:nucleus"/>
    <property type="evidence" value="ECO:0000303"/>
    <property type="project" value="ComplexPortal"/>
</dbReference>
<dbReference type="GO" id="GO:0070822">
    <property type="term" value="C:Sin3-type complex"/>
    <property type="evidence" value="ECO:0000318"/>
    <property type="project" value="GO_Central"/>
</dbReference>
<dbReference type="GO" id="GO:0030336">
    <property type="term" value="P:negative regulation of cell migration"/>
    <property type="evidence" value="ECO:0000303"/>
    <property type="project" value="ComplexPortal"/>
</dbReference>
<dbReference type="GO" id="GO:1902455">
    <property type="term" value="P:negative regulation of stem cell population maintenance"/>
    <property type="evidence" value="ECO:0000303"/>
    <property type="project" value="ComplexPortal"/>
</dbReference>
<dbReference type="GO" id="GO:0000122">
    <property type="term" value="P:negative regulation of transcription by RNA polymerase II"/>
    <property type="evidence" value="ECO:0000315"/>
    <property type="project" value="BHF-UCL"/>
</dbReference>
<dbReference type="GO" id="GO:0030512">
    <property type="term" value="P:negative regulation of transforming growth factor beta receptor signaling pathway"/>
    <property type="evidence" value="ECO:0000303"/>
    <property type="project" value="ComplexPortal"/>
</dbReference>
<dbReference type="GO" id="GO:1902459">
    <property type="term" value="P:positive regulation of stem cell population maintenance"/>
    <property type="evidence" value="ECO:0000303"/>
    <property type="project" value="ComplexPortal"/>
</dbReference>
<dbReference type="InterPro" id="IPR024137">
    <property type="entry name" value="His_deAcase_cplx_SAP130"/>
</dbReference>
<dbReference type="InterPro" id="IPR031963">
    <property type="entry name" value="SAP130_C"/>
</dbReference>
<dbReference type="PANTHER" id="PTHR13497">
    <property type="entry name" value="HISTONE DEACETYLASE COMPLEX SUBUNIT SAP130"/>
    <property type="match status" value="1"/>
</dbReference>
<dbReference type="PANTHER" id="PTHR13497:SF3">
    <property type="entry name" value="HISTONE DEACETYLASE COMPLEX SUBUNIT SAP130"/>
    <property type="match status" value="1"/>
</dbReference>
<dbReference type="Pfam" id="PF16014">
    <property type="entry name" value="SAP130_C"/>
    <property type="match status" value="1"/>
</dbReference>
<protein>
    <recommendedName>
        <fullName>Histone deacetylase complex subunit SAP130</fullName>
    </recommendedName>
    <alternativeName>
        <fullName>130 kDa Sin3-associated polypeptide</fullName>
    </alternativeName>
    <alternativeName>
        <fullName>Sin3-associated polypeptide p130</fullName>
    </alternativeName>
</protein>
<sequence>MGPPRHPQAGEIEAGGAGGGRRLQVEMSSQQFPRLGAPSTGLSQAPSQIANSGSAGLINPAATVNDESGRDSEVSAREHMSSSSSLQSREEKQEPVVVRPYPQVQMLSTHHAVASATPVAVTAPPAHLTPAVPLSFSEGLMKPPPKPTMPSRPIAPAPPSTLSLPPKVPGQVTVTMESSIPQASAIPVATISGQQGHPSNLHHIMTTNVQMSIIRSNAPGPPLHIGASHLPRGAAAAAVMSSSKVTTVLRPTSQLPNAATAQPAVQHIIHQPIQSRPPVTTSNAIPPAVVATVSATRAQSPVITTTAAHATDSALSRPTLSIQHPPSAAISIQRPAQSRDVTTRITLPSHPALGTPKQQLHTMAQKTIFSTGTPVAAATVAPILATNTIPSATTAGSVSHTQAPTSTIVTMTVPSHSSHATAVTTSNIPVAKVVPQQITHTSPRIQPDYPAERSSLIPISGHRASPNPVAMETRSDNRPSVPVQFQYFLPTYPPSAYPLAAHTYTPITSSVSTIRQYPVSAQAPNSAITAQTGVGVASTVHLNPMQLMTVDASHARHIQGIQPAPISTQGIQPAPIGTPGIQPAPLGTQGIHSATPINTQGLQPAPMGTQQPQPEGKTSAVVLADGATIVANPISNPFSAAPAATTVVQTHSQSASTNAPAQGSSPRPSILRKKPATDGAKPKSEIHVSMATPVTVSMETVSNQNNDQPTIAVPPTAQQPPPTIPTMIAAASPPSQPAVALSTIPGAVPITPPITTIAAAPPPSVTVGGSLSSVLGPPVPEIKVKEEVEPMDIMRPVSAVPPLATNTVSPSLALLANNLSMPTSDLPPGASPRKKPRKQQHVISTEEGDMMETNSTDDEKSTAKSLLVKAEKRKSPPKEYIDEEGVRYVPVRPRPPITLLRHYRNPWKAAYHHFQRYSDVRVKEEKKAMLQEIANQKGVSCRAQGWKVHLCAAQLLQLTNLEHDVYERLTNLQEGIIPKKKAATDDDLHRINELIQGNMQRCKLVMDQISEARDSMLKVLDHKDRVLKLLNKNGTVKKVSKLKRKEKV</sequence>
<gene>
    <name type="primary">SAP130</name>
</gene>
<keyword id="KW-0007">Acetylation</keyword>
<keyword id="KW-0025">Alternative splicing</keyword>
<keyword id="KW-1017">Isopeptide bond</keyword>
<keyword id="KW-0488">Methylation</keyword>
<keyword id="KW-0539">Nucleus</keyword>
<keyword id="KW-0597">Phosphoprotein</keyword>
<keyword id="KW-1267">Proteomics identification</keyword>
<keyword id="KW-1185">Reference proteome</keyword>
<keyword id="KW-0678">Repressor</keyword>
<keyword id="KW-0804">Transcription</keyword>
<keyword id="KW-0805">Transcription regulation</keyword>
<keyword id="KW-0832">Ubl conjugation</keyword>
<feature type="chain" id="PRO_0000283736" description="Histone deacetylase complex subunit SAP130">
    <location>
        <begin position="1"/>
        <end position="1048"/>
    </location>
</feature>
<feature type="region of interest" description="Disordered" evidence="2">
    <location>
        <begin position="1"/>
        <end position="95"/>
    </location>
</feature>
<feature type="region of interest" description="Disordered" evidence="2">
    <location>
        <begin position="458"/>
        <end position="477"/>
    </location>
</feature>
<feature type="region of interest" description="Disordered" evidence="2">
    <location>
        <begin position="576"/>
        <end position="617"/>
    </location>
</feature>
<feature type="region of interest" description="Disordered" evidence="2">
    <location>
        <begin position="649"/>
        <end position="687"/>
    </location>
</feature>
<feature type="region of interest" description="Disordered" evidence="2">
    <location>
        <begin position="819"/>
        <end position="871"/>
    </location>
</feature>
<feature type="region of interest" description="Interactions with SIN3A and HDAC1">
    <location>
        <begin position="836"/>
        <end position="1047"/>
    </location>
</feature>
<feature type="compositionally biased region" description="Polar residues" evidence="2">
    <location>
        <begin position="40"/>
        <end position="54"/>
    </location>
</feature>
<feature type="compositionally biased region" description="Basic and acidic residues" evidence="2">
    <location>
        <begin position="67"/>
        <end position="80"/>
    </location>
</feature>
<feature type="compositionally biased region" description="Polar residues" evidence="2">
    <location>
        <begin position="590"/>
        <end position="613"/>
    </location>
</feature>
<feature type="compositionally biased region" description="Polar residues" evidence="2">
    <location>
        <begin position="649"/>
        <end position="667"/>
    </location>
</feature>
<feature type="modified residue" description="Omega-N-methylarginine" evidence="13">
    <location>
        <position position="232"/>
    </location>
</feature>
<feature type="modified residue" description="Phosphothreonine" evidence="9 10">
    <location>
        <position position="355"/>
    </location>
</feature>
<feature type="modified residue" description="Phosphoserine" evidence="9 10 12">
    <location>
        <position position="442"/>
    </location>
</feature>
<feature type="modified residue" description="Phosphoserine" evidence="12">
    <location>
        <position position="465"/>
    </location>
</feature>
<feature type="modified residue" description="Phosphoserine" evidence="10 12">
    <location>
        <position position="855"/>
    </location>
</feature>
<feature type="modified residue" description="Phosphothreonine" evidence="10 11 12">
    <location>
        <position position="856"/>
    </location>
</feature>
<feature type="modified residue" description="Phosphoserine" evidence="9">
    <location>
        <position position="875"/>
    </location>
</feature>
<feature type="cross-link" description="Glycyl lysine isopeptide (Lys-Gly) (interchain with G-Cter in SUMO2)" evidence="14 16">
    <location>
        <position position="785"/>
    </location>
</feature>
<feature type="cross-link" description="Glycyl lysine isopeptide (Lys-Gly) (interchain with G-Cter in SUMO2)" evidence="16">
    <location>
        <position position="864"/>
    </location>
</feature>
<feature type="cross-link" description="Glycyl lysine isopeptide (Lys-Gly) (interchain with G-Cter in SUMO2)" evidence="14 15 16">
    <location>
        <position position="869"/>
    </location>
</feature>
<feature type="splice variant" id="VSP_024355" description="In isoform 2." evidence="5">
    <location>
        <begin position="1"/>
        <end position="470"/>
    </location>
</feature>
<feature type="splice variant" id="VSP_024356" description="In isoform 2 and isoform 3." evidence="5 6">
    <original>D</original>
    <variation>DGMAVRKTLIPPQPPDVASPRVESSMRSTSGSPRPA</variation>
    <location>
        <position position="678"/>
    </location>
</feature>
<accession>Q9H0E3</accession>
<accession>B7ZLM3</accession>
<accession>C9K0X9</accession>
<accession>Q4ZFV4</accession>
<accession>Q53T46</accession>
<accession>Q8WVW4</accession>
<accession>Q9H9G8</accession>
<proteinExistence type="evidence at protein level"/>
<comment type="function">
    <text evidence="3">Acts as a transcriptional repressor. May function in the assembly and/or enzymatic activity of the mSin3A corepressor complex or in mediating interactions between the complex and other regulatory complexes.</text>
</comment>
<comment type="subunit">
    <text evidence="1">Component of a mSin3A corepressor complex that contains SIN3A, SAP130, SUDS3/SAP45, ARID4B/SAP180, HDAC1 and HDAC2. Interacts (released by dead or dying cells) with CLEC4E (By similarity).</text>
</comment>
<comment type="subcellular location">
    <subcellularLocation>
        <location evidence="4">Nucleus</location>
    </subcellularLocation>
</comment>
<comment type="alternative products">
    <event type="alternative splicing"/>
    <isoform>
        <id>Q9H0E3-1</id>
        <name>1</name>
        <sequence type="displayed"/>
    </isoform>
    <isoform>
        <id>Q9H0E3-2</id>
        <name>2</name>
        <sequence type="described" ref="VSP_024355 VSP_024356"/>
    </isoform>
    <isoform>
        <id>Q9H0E3-3</id>
        <name>3</name>
        <sequence type="described" ref="VSP_024356"/>
    </isoform>
</comment>
<comment type="tissue specificity">
    <text evidence="3">Expressed in various cancer cell ines.</text>
</comment>
<comment type="domain">
    <text>The N-terminus may interact with a transcriptional coactivator.</text>
</comment>
<comment type="domain">
    <text>The C-terminus may interact with HDAC-dependent and HDAC-independent corepressors.</text>
</comment>
<comment type="PTM">
    <text evidence="8">Acetylated.</text>
</comment>
<comment type="PTM">
    <text evidence="4">Sumoylated with SUMO1.</text>
</comment>
<comment type="similarity">
    <text evidence="7">Belongs to the SAP130 family.</text>
</comment>